<sequence length="715" mass="80244">MRALRFSAGSWRCVFAWMLLLVGLAAQGAELSELERLRIAQVFPAVERIGDPEGDYGVRRLSKGEETLGYAFQTLSVTDIPAYSGKPINLQVILDPQAVIRDAYVLEHHEPILLIGIPEEKLHAFSARYDGVRADQRVVVGRSSDPQAVTVDAVSGATVTVMVVNEIVMRAAHTVAVALGLIEDRGNVRPKPAQVRQQPAATASWSELLGNGAIRRLQLSRGQIDDAFKGSEAEGIGEADAAHRDEPFIDLYSALLNPPAVGRSLLGDNQYRELMASLKPGEYAFVVLGDGEYSFKGSGYVRGGIFDRVQLRQFGDIISFRDLDYQRLSDVYAEGMPEFREMAIFVARASQRFDPGSPWTLELLVRRQTGPVAGVFTSFELACQTPEEYLERPQPTAEELAALEEAARPLWLRVWYQKSFQVGVLCTALVLLLAILFLQDRLVRRPRLMQRLRTGYLAFTLVYLGWYSLGQLSVVNVLTFVHALFEGFRWELFLSDPLLFILWTFTAASLLLWGRGVFCGWLCPFGALQELLNELARKLRVPQFQVPFAVHERLWAIKYIILLVLFGLSLESLALAEQAAEVEPFKTAITLGFDRQWWFVAYAVALLVVNLFTRKVYCRYLCPLGAALAIPAKARLFDWLKRRAECGRPCQLCARECEIQAIHPDGRIEANECHYCLDCQMTYHDQDKCPPLVNKRKKRAKSAPADNARIPAENL</sequence>
<name>NOSR_PSEAE</name>
<evidence type="ECO:0000255" key="1"/>
<evidence type="ECO:0000305" key="2"/>
<keyword id="KW-0010">Activator</keyword>
<keyword id="KW-1003">Cell membrane</keyword>
<keyword id="KW-0238">DNA-binding</keyword>
<keyword id="KW-0472">Membrane</keyword>
<keyword id="KW-1185">Reference proteome</keyword>
<keyword id="KW-0804">Transcription</keyword>
<keyword id="KW-0805">Transcription regulation</keyword>
<comment type="function">
    <text>Transcriptional activator of the nitrous-oxide reductase gene NosZ.</text>
</comment>
<comment type="subcellular location">
    <subcellularLocation>
        <location evidence="2">Cell membrane</location>
        <topology evidence="2">Peripheral membrane protein</topology>
    </subcellularLocation>
</comment>
<feature type="chain" id="PRO_0000057966" description="Regulatory protein NosR">
    <location>
        <begin position="1"/>
        <end position="715"/>
    </location>
</feature>
<feature type="DNA-binding region" description="H-T-H motif" evidence="1">
    <location>
        <begin position="210"/>
        <end position="229"/>
    </location>
</feature>
<protein>
    <recommendedName>
        <fullName>Regulatory protein NosR</fullName>
    </recommendedName>
</protein>
<dbReference type="EMBL" id="AE004091">
    <property type="protein sequence ID" value="AAG06779.1"/>
    <property type="molecule type" value="Genomic_DNA"/>
</dbReference>
<dbReference type="PIR" id="B83222">
    <property type="entry name" value="B83222"/>
</dbReference>
<dbReference type="RefSeq" id="NP_252081.1">
    <property type="nucleotide sequence ID" value="NC_002516.2"/>
</dbReference>
<dbReference type="RefSeq" id="WP_004345196.1">
    <property type="nucleotide sequence ID" value="NZ_QZGE01000017.1"/>
</dbReference>
<dbReference type="STRING" id="208964.PA3391"/>
<dbReference type="PaxDb" id="208964-PA3391"/>
<dbReference type="GeneID" id="879823"/>
<dbReference type="KEGG" id="pae:PA3391"/>
<dbReference type="PATRIC" id="fig|208964.12.peg.3550"/>
<dbReference type="PseudoCAP" id="PA3391"/>
<dbReference type="HOGENOM" id="CLU_013077_0_0_6"/>
<dbReference type="InParanoid" id="Q9HYL3"/>
<dbReference type="OrthoDB" id="9806398at2"/>
<dbReference type="PhylomeDB" id="Q9HYL3"/>
<dbReference type="BioCyc" id="PAER208964:G1FZ6-3457-MONOMER"/>
<dbReference type="Proteomes" id="UP000002438">
    <property type="component" value="Chromosome"/>
</dbReference>
<dbReference type="GO" id="GO:0005886">
    <property type="term" value="C:plasma membrane"/>
    <property type="evidence" value="ECO:0000318"/>
    <property type="project" value="GO_Central"/>
</dbReference>
<dbReference type="GO" id="GO:0003677">
    <property type="term" value="F:DNA binding"/>
    <property type="evidence" value="ECO:0007669"/>
    <property type="project" value="UniProtKB-KW"/>
</dbReference>
<dbReference type="GO" id="GO:0010181">
    <property type="term" value="F:FMN binding"/>
    <property type="evidence" value="ECO:0007669"/>
    <property type="project" value="InterPro"/>
</dbReference>
<dbReference type="GO" id="GO:0045893">
    <property type="term" value="P:positive regulation of DNA-templated transcription"/>
    <property type="evidence" value="ECO:0007669"/>
    <property type="project" value="InterPro"/>
</dbReference>
<dbReference type="InterPro" id="IPR017896">
    <property type="entry name" value="4Fe4S_Fe-S-bd"/>
</dbReference>
<dbReference type="InterPro" id="IPR007329">
    <property type="entry name" value="FMN-bd"/>
</dbReference>
<dbReference type="InterPro" id="IPR011399">
    <property type="entry name" value="NosR"/>
</dbReference>
<dbReference type="InterPro" id="IPR052378">
    <property type="entry name" value="NosR_regulator"/>
</dbReference>
<dbReference type="NCBIfam" id="NF046105">
    <property type="entry name" value="TransRegNosR"/>
    <property type="match status" value="1"/>
</dbReference>
<dbReference type="PANTHER" id="PTHR30224">
    <property type="entry name" value="ELECTRON TRANSPORT PROTEIN"/>
    <property type="match status" value="1"/>
</dbReference>
<dbReference type="PANTHER" id="PTHR30224:SF4">
    <property type="entry name" value="ELECTRON TRANSPORT PROTEIN YCCM-RELATED"/>
    <property type="match status" value="1"/>
</dbReference>
<dbReference type="Pfam" id="PF12801">
    <property type="entry name" value="Fer4_5"/>
    <property type="match status" value="2"/>
</dbReference>
<dbReference type="Pfam" id="PF04205">
    <property type="entry name" value="FMN_bind"/>
    <property type="match status" value="1"/>
</dbReference>
<dbReference type="PIRSF" id="PIRSF036354">
    <property type="entry name" value="NosR"/>
    <property type="match status" value="1"/>
</dbReference>
<dbReference type="SMART" id="SM00900">
    <property type="entry name" value="FMN_bind"/>
    <property type="match status" value="1"/>
</dbReference>
<dbReference type="SUPFAM" id="SSF54862">
    <property type="entry name" value="4Fe-4S ferredoxins"/>
    <property type="match status" value="1"/>
</dbReference>
<accession>Q9HYL3</accession>
<proteinExistence type="predicted"/>
<organism>
    <name type="scientific">Pseudomonas aeruginosa (strain ATCC 15692 / DSM 22644 / CIP 104116 / JCM 14847 / LMG 12228 / 1C / PRS 101 / PAO1)</name>
    <dbReference type="NCBI Taxonomy" id="208964"/>
    <lineage>
        <taxon>Bacteria</taxon>
        <taxon>Pseudomonadati</taxon>
        <taxon>Pseudomonadota</taxon>
        <taxon>Gammaproteobacteria</taxon>
        <taxon>Pseudomonadales</taxon>
        <taxon>Pseudomonadaceae</taxon>
        <taxon>Pseudomonas</taxon>
    </lineage>
</organism>
<reference key="1">
    <citation type="journal article" date="2000" name="Nature">
        <title>Complete genome sequence of Pseudomonas aeruginosa PAO1, an opportunistic pathogen.</title>
        <authorList>
            <person name="Stover C.K."/>
            <person name="Pham X.-Q.T."/>
            <person name="Erwin A.L."/>
            <person name="Mizoguchi S.D."/>
            <person name="Warrener P."/>
            <person name="Hickey M.J."/>
            <person name="Brinkman F.S.L."/>
            <person name="Hufnagle W.O."/>
            <person name="Kowalik D.J."/>
            <person name="Lagrou M."/>
            <person name="Garber R.L."/>
            <person name="Goltry L."/>
            <person name="Tolentino E."/>
            <person name="Westbrock-Wadman S."/>
            <person name="Yuan Y."/>
            <person name="Brody L.L."/>
            <person name="Coulter S.N."/>
            <person name="Folger K.R."/>
            <person name="Kas A."/>
            <person name="Larbig K."/>
            <person name="Lim R.M."/>
            <person name="Smith K.A."/>
            <person name="Spencer D.H."/>
            <person name="Wong G.K.-S."/>
            <person name="Wu Z."/>
            <person name="Paulsen I.T."/>
            <person name="Reizer J."/>
            <person name="Saier M.H. Jr."/>
            <person name="Hancock R.E.W."/>
            <person name="Lory S."/>
            <person name="Olson M.V."/>
        </authorList>
    </citation>
    <scope>NUCLEOTIDE SEQUENCE [LARGE SCALE GENOMIC DNA]</scope>
    <source>
        <strain>ATCC 15692 / DSM 22644 / CIP 104116 / JCM 14847 / LMG 12228 / 1C / PRS 101 / PAO1</strain>
    </source>
</reference>
<gene>
    <name type="primary">nosR</name>
    <name type="ordered locus">PA3391</name>
</gene>